<dbReference type="EC" id="2.3.1.-"/>
<dbReference type="EMBL" id="AF069299">
    <property type="protein sequence ID" value="AAC19299.1"/>
    <property type="molecule type" value="Genomic_DNA"/>
</dbReference>
<dbReference type="EMBL" id="AL161471">
    <property type="protein sequence ID" value="CAB80762.1"/>
    <property type="molecule type" value="Genomic_DNA"/>
</dbReference>
<dbReference type="EMBL" id="CP002687">
    <property type="protein sequence ID" value="AEE81817.1"/>
    <property type="molecule type" value="Genomic_DNA"/>
</dbReference>
<dbReference type="EMBL" id="BT001993">
    <property type="protein sequence ID" value="AAN72004.1"/>
    <property type="molecule type" value="mRNA"/>
</dbReference>
<dbReference type="EMBL" id="BT008463">
    <property type="protein sequence ID" value="AAP37822.1"/>
    <property type="molecule type" value="mRNA"/>
</dbReference>
<dbReference type="EMBL" id="AY086158">
    <property type="protein sequence ID" value="AAM63363.1"/>
    <property type="molecule type" value="mRNA"/>
</dbReference>
<dbReference type="PIR" id="T01332">
    <property type="entry name" value="T01332"/>
</dbReference>
<dbReference type="RefSeq" id="NP_191915.1">
    <property type="nucleotide sequence ID" value="NM_116221.1"/>
</dbReference>
<dbReference type="SMR" id="O81305"/>
<dbReference type="FunCoup" id="O81305">
    <property type="interactions" value="8"/>
</dbReference>
<dbReference type="STRING" id="3702.O81305"/>
<dbReference type="PaxDb" id="3702-AT4G00040.1"/>
<dbReference type="EnsemblPlants" id="AT4G00040.1">
    <property type="protein sequence ID" value="AT4G00040.1"/>
    <property type="gene ID" value="AT4G00040"/>
</dbReference>
<dbReference type="GeneID" id="828224"/>
<dbReference type="Gramene" id="AT4G00040.1">
    <property type="protein sequence ID" value="AT4G00040.1"/>
    <property type="gene ID" value="AT4G00040"/>
</dbReference>
<dbReference type="KEGG" id="ath:AT4G00040"/>
<dbReference type="Araport" id="AT4G00040"/>
<dbReference type="TAIR" id="AT4G00040"/>
<dbReference type="eggNOG" id="ENOG502QSSY">
    <property type="taxonomic scope" value="Eukaryota"/>
</dbReference>
<dbReference type="HOGENOM" id="CLU_034992_2_0_1"/>
<dbReference type="InParanoid" id="O81305"/>
<dbReference type="OMA" id="AYIEVAT"/>
<dbReference type="PhylomeDB" id="O81305"/>
<dbReference type="BioCyc" id="ARA:AT4G00040-MONOMER"/>
<dbReference type="UniPathway" id="UPA00154"/>
<dbReference type="PRO" id="PR:O81305"/>
<dbReference type="Proteomes" id="UP000006548">
    <property type="component" value="Chromosome 4"/>
</dbReference>
<dbReference type="ExpressionAtlas" id="O81305">
    <property type="expression patterns" value="baseline and differential"/>
</dbReference>
<dbReference type="GO" id="GO:0005783">
    <property type="term" value="C:endoplasmic reticulum"/>
    <property type="evidence" value="ECO:0007669"/>
    <property type="project" value="UniProtKB-SubCell"/>
</dbReference>
<dbReference type="GO" id="GO:0016747">
    <property type="term" value="F:acyltransferase activity, transferring groups other than amino-acyl groups"/>
    <property type="evidence" value="ECO:0007669"/>
    <property type="project" value="InterPro"/>
</dbReference>
<dbReference type="GO" id="GO:0009813">
    <property type="term" value="P:flavonoid biosynthetic process"/>
    <property type="evidence" value="ECO:0007669"/>
    <property type="project" value="UniProtKB-UniPathway"/>
</dbReference>
<dbReference type="CDD" id="cd00831">
    <property type="entry name" value="CHS_like"/>
    <property type="match status" value="1"/>
</dbReference>
<dbReference type="FunFam" id="3.40.47.10:FF:000014">
    <property type="entry name" value="Chalcone synthase 1"/>
    <property type="match status" value="1"/>
</dbReference>
<dbReference type="FunFam" id="3.40.47.10:FF:000025">
    <property type="entry name" value="Chalcone synthase 2"/>
    <property type="match status" value="1"/>
</dbReference>
<dbReference type="Gene3D" id="3.40.47.10">
    <property type="match status" value="2"/>
</dbReference>
<dbReference type="InterPro" id="IPR012328">
    <property type="entry name" value="Chalcone/stilbene_synt_C"/>
</dbReference>
<dbReference type="InterPro" id="IPR001099">
    <property type="entry name" value="Chalcone/stilbene_synt_N"/>
</dbReference>
<dbReference type="InterPro" id="IPR011141">
    <property type="entry name" value="Polyketide_synthase_type-III"/>
</dbReference>
<dbReference type="InterPro" id="IPR016039">
    <property type="entry name" value="Thiolase-like"/>
</dbReference>
<dbReference type="PANTHER" id="PTHR11877">
    <property type="entry name" value="HYDROXYMETHYLGLUTARYL-COA SYNTHASE"/>
    <property type="match status" value="1"/>
</dbReference>
<dbReference type="PANTHER" id="PTHR11877:SF53">
    <property type="entry name" value="TYPE III POLYKETIDE SYNTHASE C"/>
    <property type="match status" value="1"/>
</dbReference>
<dbReference type="Pfam" id="PF02797">
    <property type="entry name" value="Chal_sti_synt_C"/>
    <property type="match status" value="1"/>
</dbReference>
<dbReference type="Pfam" id="PF00195">
    <property type="entry name" value="Chal_sti_synt_N"/>
    <property type="match status" value="1"/>
</dbReference>
<dbReference type="PIRSF" id="PIRSF000451">
    <property type="entry name" value="PKS_III"/>
    <property type="match status" value="1"/>
</dbReference>
<dbReference type="SUPFAM" id="SSF53901">
    <property type="entry name" value="Thiolase-like"/>
    <property type="match status" value="2"/>
</dbReference>
<organism evidence="10">
    <name type="scientific">Arabidopsis thaliana</name>
    <name type="common">Mouse-ear cress</name>
    <dbReference type="NCBI Taxonomy" id="3702"/>
    <lineage>
        <taxon>Eukaryota</taxon>
        <taxon>Viridiplantae</taxon>
        <taxon>Streptophyta</taxon>
        <taxon>Embryophyta</taxon>
        <taxon>Tracheophyta</taxon>
        <taxon>Spermatophyta</taxon>
        <taxon>Magnoliopsida</taxon>
        <taxon>eudicotyledons</taxon>
        <taxon>Gunneridae</taxon>
        <taxon>Pentapetalae</taxon>
        <taxon>rosids</taxon>
        <taxon>malvids</taxon>
        <taxon>Brassicales</taxon>
        <taxon>Brassicaceae</taxon>
        <taxon>Camelineae</taxon>
        <taxon>Arabidopsis</taxon>
    </lineage>
</organism>
<feature type="chain" id="PRO_0000432842" description="Type III polyketide synthase C">
    <location>
        <begin position="1"/>
        <end position="385"/>
    </location>
</feature>
<feature type="active site" description="Nucleophile" evidence="4 6">
    <location>
        <position position="165"/>
    </location>
</feature>
<feature type="binding site" evidence="2">
    <location>
        <begin position="56"/>
        <end position="63"/>
    </location>
    <ligand>
        <name>CoA</name>
        <dbReference type="ChEBI" id="CHEBI:57287"/>
    </ligand>
</feature>
<feature type="binding site" evidence="2">
    <location>
        <begin position="217"/>
        <end position="218"/>
    </location>
    <ligand>
        <name>substrate</name>
    </ligand>
</feature>
<feature type="binding site" evidence="3">
    <location>
        <position position="267"/>
    </location>
    <ligand>
        <name>CoA</name>
        <dbReference type="ChEBI" id="CHEBI:57287"/>
    </ligand>
</feature>
<feature type="binding site" evidence="3">
    <location>
        <begin position="307"/>
        <end position="310"/>
    </location>
    <ligand>
        <name>CoA</name>
        <dbReference type="ChEBI" id="CHEBI:57287"/>
    </ligand>
</feature>
<feature type="binding site" evidence="2">
    <location>
        <position position="310"/>
    </location>
    <ligand>
        <name>CoA</name>
        <dbReference type="ChEBI" id="CHEBI:57287"/>
    </ligand>
</feature>
<feature type="sequence conflict" description="In Ref. 4; AAM63363." evidence="7" ref="4">
    <original>N</original>
    <variation>D</variation>
    <location>
        <position position="50"/>
    </location>
</feature>
<feature type="sequence conflict" description="In Ref. 4; AAM63363." evidence="7" ref="4">
    <original>N</original>
    <variation>K</variation>
    <location>
        <position position="203"/>
    </location>
</feature>
<feature type="sequence conflict" description="In Ref. 4; AAM63363." evidence="7" ref="4">
    <original>N</original>
    <variation>D</variation>
    <location>
        <position position="209"/>
    </location>
</feature>
<sequence>MLVSARVEKQKRVAYQGKATVLALGKALPSNVVSQENLVEEYLREIKCDNLSIKDKLQHLCKSTTVKTRYTVMSRETLHKYPELATEGSPTIKQRLEIANDAVVQMAYEASLVCIKEWGRAVEDITHLVYVSSSEFRLPGGDLYLSAQLGLSNEVQRVMLYFLGCYGGLSGLRVAKDIAENNPGSRVLLTTSETTVLGFRPPNKARPYNLVGAALFGDGAAALIIGADPTESESPFMELHCAMQQFLPQTQGVIDGRLSEEGITFKLGRDLPQKIEDNVEEFCKKLVAKAGSGALELNDLFWAVHPGGPAILSGLETKLKLKPEKLECSRRALMDYGNVSSNTIFYIMDKVRDELEKKGTEGEEWGLGLAFGPGITFEGFLMRNL</sequence>
<accession>O81305</accession>
<accession>Q8LD79</accession>
<gene>
    <name evidence="8" type="ordered locus">At4g00040</name>
    <name evidence="9" type="ORF">F6N15.12</name>
</gene>
<keyword id="KW-0012">Acyltransferase</keyword>
<keyword id="KW-0217">Developmental protein</keyword>
<keyword id="KW-0256">Endoplasmic reticulum</keyword>
<keyword id="KW-0284">Flavonoid biosynthesis</keyword>
<keyword id="KW-1185">Reference proteome</keyword>
<keyword id="KW-0808">Transferase</keyword>
<comment type="function">
    <text evidence="1">Plant type III polyketide synthases (PKSs) that catalyzes the condensation of malonyl-CoA units with various CoA ester starter molecules to generate a diverse array of natural products including long-chain alkyl alpha-pyrones.</text>
</comment>
<comment type="pathway">
    <text evidence="5">Secondary metabolite biosynthesis; flavonoid biosynthesis.</text>
</comment>
<comment type="subunit">
    <text evidence="2">Homodimer.</text>
</comment>
<comment type="subcellular location">
    <subcellularLocation>
        <location evidence="1">Endoplasmic reticulum</location>
    </subcellularLocation>
</comment>
<comment type="similarity">
    <text evidence="7">Belongs to the thiolase-like superfamily. Chalcone/stilbene synthases family.</text>
</comment>
<evidence type="ECO:0000250" key="1">
    <source>
        <dbReference type="UniProtKB" id="O23674"/>
    </source>
</evidence>
<evidence type="ECO:0000250" key="2">
    <source>
        <dbReference type="UniProtKB" id="P30074"/>
    </source>
</evidence>
<evidence type="ECO:0000250" key="3">
    <source>
        <dbReference type="UniProtKB" id="Q58VP7"/>
    </source>
</evidence>
<evidence type="ECO:0000250" key="4">
    <source>
        <dbReference type="UniProtKB" id="Q94FV7"/>
    </source>
</evidence>
<evidence type="ECO:0000250" key="5">
    <source>
        <dbReference type="UniProtKB" id="Q9LKP7"/>
    </source>
</evidence>
<evidence type="ECO:0000255" key="6">
    <source>
        <dbReference type="PROSITE-ProRule" id="PRU10023"/>
    </source>
</evidence>
<evidence type="ECO:0000305" key="7"/>
<evidence type="ECO:0000312" key="8">
    <source>
        <dbReference type="Araport" id="AT4G00040"/>
    </source>
</evidence>
<evidence type="ECO:0000312" key="9">
    <source>
        <dbReference type="EMBL" id="AAC19299.1"/>
    </source>
</evidence>
<evidence type="ECO:0000312" key="10">
    <source>
        <dbReference type="Proteomes" id="UP000006548"/>
    </source>
</evidence>
<protein>
    <recommendedName>
        <fullName>Type III polyketide synthase C</fullName>
        <shortName>PKS-C</shortName>
        <ecNumber>2.3.1.-</ecNumber>
    </recommendedName>
</protein>
<proteinExistence type="evidence at transcript level"/>
<reference key="1">
    <citation type="journal article" date="1999" name="Nature">
        <title>Sequence and analysis of chromosome 4 of the plant Arabidopsis thaliana.</title>
        <authorList>
            <person name="Mayer K.F.X."/>
            <person name="Schueller C."/>
            <person name="Wambutt R."/>
            <person name="Murphy G."/>
            <person name="Volckaert G."/>
            <person name="Pohl T."/>
            <person name="Duesterhoeft A."/>
            <person name="Stiekema W."/>
            <person name="Entian K.-D."/>
            <person name="Terryn N."/>
            <person name="Harris B."/>
            <person name="Ansorge W."/>
            <person name="Brandt P."/>
            <person name="Grivell L.A."/>
            <person name="Rieger M."/>
            <person name="Weichselgartner M."/>
            <person name="de Simone V."/>
            <person name="Obermaier B."/>
            <person name="Mache R."/>
            <person name="Mueller M."/>
            <person name="Kreis M."/>
            <person name="Delseny M."/>
            <person name="Puigdomenech P."/>
            <person name="Watson M."/>
            <person name="Schmidtheini T."/>
            <person name="Reichert B."/>
            <person name="Portetelle D."/>
            <person name="Perez-Alonso M."/>
            <person name="Boutry M."/>
            <person name="Bancroft I."/>
            <person name="Vos P."/>
            <person name="Hoheisel J."/>
            <person name="Zimmermann W."/>
            <person name="Wedler H."/>
            <person name="Ridley P."/>
            <person name="Langham S.-A."/>
            <person name="McCullagh B."/>
            <person name="Bilham L."/>
            <person name="Robben J."/>
            <person name="van der Schueren J."/>
            <person name="Grymonprez B."/>
            <person name="Chuang Y.-J."/>
            <person name="Vandenbussche F."/>
            <person name="Braeken M."/>
            <person name="Weltjens I."/>
            <person name="Voet M."/>
            <person name="Bastiaens I."/>
            <person name="Aert R."/>
            <person name="Defoor E."/>
            <person name="Weitzenegger T."/>
            <person name="Bothe G."/>
            <person name="Ramsperger U."/>
            <person name="Hilbert H."/>
            <person name="Braun M."/>
            <person name="Holzer E."/>
            <person name="Brandt A."/>
            <person name="Peters S."/>
            <person name="van Staveren M."/>
            <person name="Dirkse W."/>
            <person name="Mooijman P."/>
            <person name="Klein Lankhorst R."/>
            <person name="Rose M."/>
            <person name="Hauf J."/>
            <person name="Koetter P."/>
            <person name="Berneiser S."/>
            <person name="Hempel S."/>
            <person name="Feldpausch M."/>
            <person name="Lamberth S."/>
            <person name="Van den Daele H."/>
            <person name="De Keyser A."/>
            <person name="Buysshaert C."/>
            <person name="Gielen J."/>
            <person name="Villarroel R."/>
            <person name="De Clercq R."/>
            <person name="van Montagu M."/>
            <person name="Rogers J."/>
            <person name="Cronin A."/>
            <person name="Quail M.A."/>
            <person name="Bray-Allen S."/>
            <person name="Clark L."/>
            <person name="Doggett J."/>
            <person name="Hall S."/>
            <person name="Kay M."/>
            <person name="Lennard N."/>
            <person name="McLay K."/>
            <person name="Mayes R."/>
            <person name="Pettett A."/>
            <person name="Rajandream M.A."/>
            <person name="Lyne M."/>
            <person name="Benes V."/>
            <person name="Rechmann S."/>
            <person name="Borkova D."/>
            <person name="Bloecker H."/>
            <person name="Scharfe M."/>
            <person name="Grimm M."/>
            <person name="Loehnert T.-H."/>
            <person name="Dose S."/>
            <person name="de Haan M."/>
            <person name="Maarse A.C."/>
            <person name="Schaefer M."/>
            <person name="Mueller-Auer S."/>
            <person name="Gabel C."/>
            <person name="Fuchs M."/>
            <person name="Fartmann B."/>
            <person name="Granderath K."/>
            <person name="Dauner D."/>
            <person name="Herzl A."/>
            <person name="Neumann S."/>
            <person name="Argiriou A."/>
            <person name="Vitale D."/>
            <person name="Liguori R."/>
            <person name="Piravandi E."/>
            <person name="Massenet O."/>
            <person name="Quigley F."/>
            <person name="Clabauld G."/>
            <person name="Muendlein A."/>
            <person name="Felber R."/>
            <person name="Schnabl S."/>
            <person name="Hiller R."/>
            <person name="Schmidt W."/>
            <person name="Lecharny A."/>
            <person name="Aubourg S."/>
            <person name="Chefdor F."/>
            <person name="Cooke R."/>
            <person name="Berger C."/>
            <person name="Monfort A."/>
            <person name="Casacuberta E."/>
            <person name="Gibbons T."/>
            <person name="Weber N."/>
            <person name="Vandenbol M."/>
            <person name="Bargues M."/>
            <person name="Terol J."/>
            <person name="Torres A."/>
            <person name="Perez-Perez A."/>
            <person name="Purnelle B."/>
            <person name="Bent E."/>
            <person name="Johnson S."/>
            <person name="Tacon D."/>
            <person name="Jesse T."/>
            <person name="Heijnen L."/>
            <person name="Schwarz S."/>
            <person name="Scholler P."/>
            <person name="Heber S."/>
            <person name="Francs P."/>
            <person name="Bielke C."/>
            <person name="Frishman D."/>
            <person name="Haase D."/>
            <person name="Lemcke K."/>
            <person name="Mewes H.-W."/>
            <person name="Stocker S."/>
            <person name="Zaccaria P."/>
            <person name="Bevan M."/>
            <person name="Wilson R.K."/>
            <person name="de la Bastide M."/>
            <person name="Habermann K."/>
            <person name="Parnell L."/>
            <person name="Dedhia N."/>
            <person name="Gnoj L."/>
            <person name="Schutz K."/>
            <person name="Huang E."/>
            <person name="Spiegel L."/>
            <person name="Sekhon M."/>
            <person name="Murray J."/>
            <person name="Sheet P."/>
            <person name="Cordes M."/>
            <person name="Abu-Threideh J."/>
            <person name="Stoneking T."/>
            <person name="Kalicki J."/>
            <person name="Graves T."/>
            <person name="Harmon G."/>
            <person name="Edwards J."/>
            <person name="Latreille P."/>
            <person name="Courtney L."/>
            <person name="Cloud J."/>
            <person name="Abbott A."/>
            <person name="Scott K."/>
            <person name="Johnson D."/>
            <person name="Minx P."/>
            <person name="Bentley D."/>
            <person name="Fulton B."/>
            <person name="Miller N."/>
            <person name="Greco T."/>
            <person name="Kemp K."/>
            <person name="Kramer J."/>
            <person name="Fulton L."/>
            <person name="Mardis E."/>
            <person name="Dante M."/>
            <person name="Pepin K."/>
            <person name="Hillier L.W."/>
            <person name="Nelson J."/>
            <person name="Spieth J."/>
            <person name="Ryan E."/>
            <person name="Andrews S."/>
            <person name="Geisel C."/>
            <person name="Layman D."/>
            <person name="Du H."/>
            <person name="Ali J."/>
            <person name="Berghoff A."/>
            <person name="Jones K."/>
            <person name="Drone K."/>
            <person name="Cotton M."/>
            <person name="Joshu C."/>
            <person name="Antonoiu B."/>
            <person name="Zidanic M."/>
            <person name="Strong C."/>
            <person name="Sun H."/>
            <person name="Lamar B."/>
            <person name="Yordan C."/>
            <person name="Ma P."/>
            <person name="Zhong J."/>
            <person name="Preston R."/>
            <person name="Vil D."/>
            <person name="Shekher M."/>
            <person name="Matero A."/>
            <person name="Shah R."/>
            <person name="Swaby I.K."/>
            <person name="O'Shaughnessy A."/>
            <person name="Rodriguez M."/>
            <person name="Hoffman J."/>
            <person name="Till S."/>
            <person name="Granat S."/>
            <person name="Shohdy N."/>
            <person name="Hasegawa A."/>
            <person name="Hameed A."/>
            <person name="Lodhi M."/>
            <person name="Johnson A."/>
            <person name="Chen E."/>
            <person name="Marra M.A."/>
            <person name="Martienssen R."/>
            <person name="McCombie W.R."/>
        </authorList>
    </citation>
    <scope>NUCLEOTIDE SEQUENCE [LARGE SCALE GENOMIC DNA]</scope>
    <source>
        <strain>cv. Columbia</strain>
    </source>
</reference>
<reference key="2">
    <citation type="journal article" date="2017" name="Plant J.">
        <title>Araport11: a complete reannotation of the Arabidopsis thaliana reference genome.</title>
        <authorList>
            <person name="Cheng C.Y."/>
            <person name="Krishnakumar V."/>
            <person name="Chan A.P."/>
            <person name="Thibaud-Nissen F."/>
            <person name="Schobel S."/>
            <person name="Town C.D."/>
        </authorList>
    </citation>
    <scope>GENOME REANNOTATION</scope>
    <source>
        <strain>cv. Columbia</strain>
    </source>
</reference>
<reference key="3">
    <citation type="journal article" date="2003" name="Science">
        <title>Empirical analysis of transcriptional activity in the Arabidopsis genome.</title>
        <authorList>
            <person name="Yamada K."/>
            <person name="Lim J."/>
            <person name="Dale J.M."/>
            <person name="Chen H."/>
            <person name="Shinn P."/>
            <person name="Palm C.J."/>
            <person name="Southwick A.M."/>
            <person name="Wu H.C."/>
            <person name="Kim C.J."/>
            <person name="Nguyen M."/>
            <person name="Pham P.K."/>
            <person name="Cheuk R.F."/>
            <person name="Karlin-Newmann G."/>
            <person name="Liu S.X."/>
            <person name="Lam B."/>
            <person name="Sakano H."/>
            <person name="Wu T."/>
            <person name="Yu G."/>
            <person name="Miranda M."/>
            <person name="Quach H.L."/>
            <person name="Tripp M."/>
            <person name="Chang C.H."/>
            <person name="Lee J.M."/>
            <person name="Toriumi M.J."/>
            <person name="Chan M.M."/>
            <person name="Tang C.C."/>
            <person name="Onodera C.S."/>
            <person name="Deng J.M."/>
            <person name="Akiyama K."/>
            <person name="Ansari Y."/>
            <person name="Arakawa T."/>
            <person name="Banh J."/>
            <person name="Banno F."/>
            <person name="Bowser L."/>
            <person name="Brooks S.Y."/>
            <person name="Carninci P."/>
            <person name="Chao Q."/>
            <person name="Choy N."/>
            <person name="Enju A."/>
            <person name="Goldsmith A.D."/>
            <person name="Gurjal M."/>
            <person name="Hansen N.F."/>
            <person name="Hayashizaki Y."/>
            <person name="Johnson-Hopson C."/>
            <person name="Hsuan V.W."/>
            <person name="Iida K."/>
            <person name="Karnes M."/>
            <person name="Khan S."/>
            <person name="Koesema E."/>
            <person name="Ishida J."/>
            <person name="Jiang P.X."/>
            <person name="Jones T."/>
            <person name="Kawai J."/>
            <person name="Kamiya A."/>
            <person name="Meyers C."/>
            <person name="Nakajima M."/>
            <person name="Narusaka M."/>
            <person name="Seki M."/>
            <person name="Sakurai T."/>
            <person name="Satou M."/>
            <person name="Tamse R."/>
            <person name="Vaysberg M."/>
            <person name="Wallender E.K."/>
            <person name="Wong C."/>
            <person name="Yamamura Y."/>
            <person name="Yuan S."/>
            <person name="Shinozaki K."/>
            <person name="Davis R.W."/>
            <person name="Theologis A."/>
            <person name="Ecker J.R."/>
        </authorList>
    </citation>
    <scope>NUCLEOTIDE SEQUENCE [LARGE SCALE MRNA]</scope>
    <source>
        <strain>cv. Columbia</strain>
    </source>
</reference>
<reference key="4">
    <citation type="submission" date="2002-03" db="EMBL/GenBank/DDBJ databases">
        <title>Full-length cDNA from Arabidopsis thaliana.</title>
        <authorList>
            <person name="Brover V.V."/>
            <person name="Troukhan M.E."/>
            <person name="Alexandrov N.A."/>
            <person name="Lu Y.-P."/>
            <person name="Flavell R.B."/>
            <person name="Feldmann K.A."/>
        </authorList>
    </citation>
    <scope>NUCLEOTIDE SEQUENCE [LARGE SCALE MRNA]</scope>
</reference>
<reference key="5">
    <citation type="journal article" date="2010" name="Plant Physiol.">
        <title>LAP5 and LAP6 encode anther-specific proteins with similarity to chalcone synthase essential for pollen exine development in Arabidopsis.</title>
        <authorList>
            <person name="Dobritsa A.A."/>
            <person name="Lei Z."/>
            <person name="Nishikawa S."/>
            <person name="Urbanczyk-Wochniak E."/>
            <person name="Huhman D.V."/>
            <person name="Preuss D."/>
            <person name="Sumner L.W."/>
        </authorList>
    </citation>
    <scope>GENE FAMILY</scope>
    <source>
        <strain>cv. Landsberg erecta</strain>
    </source>
</reference>
<name>PKSC_ARATH</name>